<evidence type="ECO:0000250" key="1"/>
<evidence type="ECO:0000250" key="2">
    <source>
        <dbReference type="UniProtKB" id="P04156"/>
    </source>
</evidence>
<evidence type="ECO:0000250" key="3">
    <source>
        <dbReference type="UniProtKB" id="P04273"/>
    </source>
</evidence>
<evidence type="ECO:0000250" key="4">
    <source>
        <dbReference type="UniProtKB" id="P04925"/>
    </source>
</evidence>
<evidence type="ECO:0000255" key="5"/>
<evidence type="ECO:0000256" key="6">
    <source>
        <dbReference type="SAM" id="MobiDB-lite"/>
    </source>
</evidence>
<evidence type="ECO:0000305" key="7"/>
<comment type="function">
    <text evidence="2 4">Its primary physiological function is unclear. Has cytoprotective activity against internal or environmental stresses. May play a role in neuronal development and synaptic plasticity. May be required for neuronal myelin sheath maintenance. May play a role in iron uptake and iron homeostasis. Soluble oligomers are toxic to cultured neuroblastoma cells and induce apoptosis (in vitro). Association with GPC1 (via its heparan sulfate chains) targets PRNP to lipid rafts. Also provides Cu(2+) or Zn(2+) for the ascorbate-mediated GPC1 deaminase degradation of its heparan sulfate side chains (By similarity).</text>
</comment>
<comment type="subunit">
    <text evidence="2 4">Monomer and homodimer. Has a tendency to aggregate into amyloid fibrils containing a cross-beta spine, formed by a steric zipper of superposed beta-strands. Soluble oligomers may represent an intermediate stage on the path to fibril formation. Copper binding may promote oligomerization. Interacts with GRB2, APP, ERI3/PRNPIP and SYN1. Mislocalized cytosolically exposed PrP interacts with MGRN1; this interaction alters MGRN1 subcellular location and causes lysosomal enlargement. Interacts with KIAA1191.</text>
</comment>
<comment type="subcellular location">
    <subcellularLocation>
        <location evidence="2">Cell membrane</location>
        <topology evidence="2">Lipid-anchor</topology>
        <topology evidence="2">GPI-anchor</topology>
    </subcellularLocation>
    <subcellularLocation>
        <location evidence="4">Golgi apparatus</location>
    </subcellularLocation>
    <text evidence="2">Targeted to lipid rafts via association with the heparan sulfate chains of GPC1. Colocates, in the presence of Cu(2+), to vesicles in para- and perinuclear regions, where both proteins undergo internalization. Heparin displaces PRNP from lipid rafts and promotes endocytosis.</text>
</comment>
<comment type="domain">
    <text evidence="2">The normal, monomeric form has a mainly alpha-helical structure. The disease-associated, protease-resistant form forms amyloid fibrils containing a cross-beta spine, formed by a steric zipper of superposed beta-strands. Disease mutations may favor intermolecular contacts via short beta strands, and may thereby trigger oligomerization.</text>
</comment>
<comment type="domain">
    <text evidence="2">Contains an N-terminal region composed of octamer repeats. At low copper concentrations, the sidechains of His residues from three or four repeats contribute to the binding of a single copper ion. Alternatively, a copper ion can be bound by interaction with the sidechain and backbone amide nitrogen of a single His residue. The observed copper binding stoichiometry suggests that two repeat regions cooperate to stabilize the binding of a single copper ion. At higher copper concentrations, each octamer can bind one copper ion by interactions with the His sidechain and Gly backbone atoms. A mixture of binding types may occur, especially in the case of octamer repeat expansion. Copper binding may stabilize the conformation of this region and may promote oligomerization.</text>
</comment>
<comment type="disease">
    <text evidence="7">Found in high quantity in the brain of humans and animals infected with degenerative neurological diseases such as kuru, Creutzfeldt-Jakob disease (CJD), Gerstmann-Straussler syndrome (GSS), scrapie, bovine spongiform encephalopathy (BSE), transmissible mink encephalopathy (TME), etc.</text>
</comment>
<comment type="similarity">
    <text evidence="7">Belongs to the prion family.</text>
</comment>
<protein>
    <recommendedName>
        <fullName>Major prion protein</fullName>
        <shortName>PrP</shortName>
    </recommendedName>
    <alternativeName>
        <fullName>PrP27-30</fullName>
    </alternativeName>
    <alternativeName>
        <fullName>PrP33-35C</fullName>
    </alternativeName>
    <cdAntigenName>CD230</cdAntigenName>
</protein>
<gene>
    <name type="primary">PRNP</name>
    <name type="synonym">PRP</name>
</gene>
<reference key="1">
    <citation type="journal article" date="1995" name="Gene">
        <title>A candidate marsupial PrP gene reveals two domains conserved in mammalian PrP proteins.</title>
        <authorList>
            <person name="Windl O."/>
            <person name="Dempster M."/>
            <person name="Estibeiro P."/>
            <person name="Lathe R."/>
        </authorList>
    </citation>
    <scope>NUCLEOTIDE SEQUENCE [GENOMIC DNA]</scope>
</reference>
<dbReference type="EMBL" id="L38993">
    <property type="protein sequence ID" value="AAA61833.1"/>
    <property type="molecule type" value="Genomic_DNA"/>
</dbReference>
<dbReference type="SMR" id="P51780"/>
<dbReference type="GlyCosmos" id="P51780">
    <property type="glycosylation" value="2 sites, No reported glycans"/>
</dbReference>
<dbReference type="GO" id="GO:0005794">
    <property type="term" value="C:Golgi apparatus"/>
    <property type="evidence" value="ECO:0007669"/>
    <property type="project" value="UniProtKB-SubCell"/>
</dbReference>
<dbReference type="GO" id="GO:0005886">
    <property type="term" value="C:plasma membrane"/>
    <property type="evidence" value="ECO:0007669"/>
    <property type="project" value="UniProtKB-SubCell"/>
</dbReference>
<dbReference type="GO" id="GO:0098552">
    <property type="term" value="C:side of membrane"/>
    <property type="evidence" value="ECO:0007669"/>
    <property type="project" value="UniProtKB-KW"/>
</dbReference>
<dbReference type="GO" id="GO:0005507">
    <property type="term" value="F:copper ion binding"/>
    <property type="evidence" value="ECO:0000250"/>
    <property type="project" value="UniProtKB"/>
</dbReference>
<dbReference type="GO" id="GO:0051260">
    <property type="term" value="P:protein homooligomerization"/>
    <property type="evidence" value="ECO:0007669"/>
    <property type="project" value="InterPro"/>
</dbReference>
<dbReference type="FunFam" id="1.10.790.10:FF:000001">
    <property type="entry name" value="Major prion protein"/>
    <property type="match status" value="1"/>
</dbReference>
<dbReference type="Gene3D" id="1.10.790.10">
    <property type="entry name" value="Prion/Doppel protein, beta-ribbon domain"/>
    <property type="match status" value="1"/>
</dbReference>
<dbReference type="InterPro" id="IPR000817">
    <property type="entry name" value="Prion"/>
</dbReference>
<dbReference type="InterPro" id="IPR036924">
    <property type="entry name" value="Prion/Doppel_b-ribbon_dom_sf"/>
</dbReference>
<dbReference type="InterPro" id="IPR022416">
    <property type="entry name" value="Prion/Doppel_prot_b-ribbon_dom"/>
</dbReference>
<dbReference type="InterPro" id="IPR025860">
    <property type="entry name" value="Prion_N"/>
</dbReference>
<dbReference type="PANTHER" id="PTHR15506">
    <property type="entry name" value="DOPPEL PRION"/>
    <property type="match status" value="1"/>
</dbReference>
<dbReference type="PANTHER" id="PTHR15506:SF2">
    <property type="entry name" value="MAJOR PRION PROTEIN"/>
    <property type="match status" value="1"/>
</dbReference>
<dbReference type="Pfam" id="PF00377">
    <property type="entry name" value="Prion"/>
    <property type="match status" value="1"/>
</dbReference>
<dbReference type="Pfam" id="PF11587">
    <property type="entry name" value="Prion_bPrPp"/>
    <property type="match status" value="1"/>
</dbReference>
<dbReference type="PRINTS" id="PR00341">
    <property type="entry name" value="PRION"/>
</dbReference>
<dbReference type="SMART" id="SM00157">
    <property type="entry name" value="PRP"/>
    <property type="match status" value="1"/>
</dbReference>
<dbReference type="SUPFAM" id="SSF54098">
    <property type="entry name" value="Prion-like"/>
    <property type="match status" value="1"/>
</dbReference>
<dbReference type="PROSITE" id="PS00291">
    <property type="entry name" value="PRION_1"/>
    <property type="match status" value="1"/>
</dbReference>
<dbReference type="PROSITE" id="PS00706">
    <property type="entry name" value="PRION_2"/>
    <property type="match status" value="1"/>
</dbReference>
<accession>P51780</accession>
<feature type="signal peptide" evidence="1">
    <location>
        <begin position="1"/>
        <end position="24"/>
    </location>
</feature>
<feature type="chain" id="PRO_0000025739" description="Major prion protein">
    <location>
        <begin position="25"/>
        <end position="236"/>
    </location>
</feature>
<feature type="propeptide" id="PRO_0000025740" description="Removed in mature form" evidence="5">
    <location>
        <begin position="237"/>
        <end position="259"/>
    </location>
</feature>
<feature type="region of interest" description="Interaction with GRB2, ERI3 and SYN1" evidence="4">
    <location>
        <begin position="25"/>
        <end position="235"/>
    </location>
</feature>
<feature type="region of interest" description="Disordered" evidence="6">
    <location>
        <begin position="29"/>
        <end position="110"/>
    </location>
</feature>
<feature type="compositionally biased region" description="Gly residues" evidence="6">
    <location>
        <begin position="91"/>
        <end position="101"/>
    </location>
</feature>
<feature type="binding site" evidence="2">
    <location>
        <position position="63"/>
    </location>
    <ligand>
        <name>Cu(2+)</name>
        <dbReference type="ChEBI" id="CHEBI:29036"/>
        <label>1</label>
    </ligand>
</feature>
<feature type="binding site" evidence="2">
    <location>
        <position position="64"/>
    </location>
    <ligand>
        <name>Cu(2+)</name>
        <dbReference type="ChEBI" id="CHEBI:29036"/>
        <label>1</label>
    </ligand>
</feature>
<feature type="binding site" evidence="2">
    <location>
        <position position="72"/>
    </location>
    <ligand>
        <name>Cu(2+)</name>
        <dbReference type="ChEBI" id="CHEBI:29036"/>
        <label>2</label>
    </ligand>
</feature>
<feature type="binding site" evidence="2">
    <location>
        <position position="74"/>
    </location>
    <ligand>
        <name>Cu(2+)</name>
        <dbReference type="ChEBI" id="CHEBI:29036"/>
        <label>2</label>
    </ligand>
</feature>
<feature type="binding site" evidence="2">
    <location>
        <position position="82"/>
    </location>
    <ligand>
        <name>Cu(2+)</name>
        <dbReference type="ChEBI" id="CHEBI:29036"/>
        <label>3</label>
    </ligand>
</feature>
<feature type="binding site" evidence="2">
    <location>
        <position position="84"/>
    </location>
    <ligand>
        <name>Cu(2+)</name>
        <dbReference type="ChEBI" id="CHEBI:29036"/>
        <label>3</label>
    </ligand>
</feature>
<feature type="binding site" evidence="2">
    <location>
        <position position="92"/>
    </location>
    <ligand>
        <name>Cu(2+)</name>
        <dbReference type="ChEBI" id="CHEBI:29036"/>
        <label>4</label>
    </ligand>
</feature>
<feature type="binding site" evidence="2">
    <location>
        <position position="94"/>
    </location>
    <ligand>
        <name>Cu(2+)</name>
        <dbReference type="ChEBI" id="CHEBI:29036"/>
        <label>4</label>
    </ligand>
</feature>
<feature type="lipid moiety-binding region" description="GPI-anchor amidated asparagine" evidence="5">
    <location>
        <position position="236"/>
    </location>
</feature>
<feature type="glycosylation site" description="N-linked (GlcNAc...) asparagine" evidence="5">
    <location>
        <position position="186"/>
    </location>
</feature>
<feature type="glycosylation site" description="N-linked (GlcNAc...) asparagine" evidence="5">
    <location>
        <position position="202"/>
    </location>
</feature>
<feature type="disulfide bond" evidence="3">
    <location>
        <begin position="184"/>
        <end position="219"/>
    </location>
</feature>
<name>PRIO_TRIVU</name>
<proteinExistence type="inferred from homology"/>
<organism>
    <name type="scientific">Trichosurus vulpecula</name>
    <name type="common">Brush-tailed possum</name>
    <dbReference type="NCBI Taxonomy" id="9337"/>
    <lineage>
        <taxon>Eukaryota</taxon>
        <taxon>Metazoa</taxon>
        <taxon>Chordata</taxon>
        <taxon>Craniata</taxon>
        <taxon>Vertebrata</taxon>
        <taxon>Euteleostomi</taxon>
        <taxon>Mammalia</taxon>
        <taxon>Metatheria</taxon>
        <taxon>Diprotodontia</taxon>
        <taxon>Phalangeridae</taxon>
        <taxon>Trichosurus</taxon>
    </lineage>
</organism>
<keyword id="KW-0034">Amyloid</keyword>
<keyword id="KW-1003">Cell membrane</keyword>
<keyword id="KW-0186">Copper</keyword>
<keyword id="KW-1015">Disulfide bond</keyword>
<keyword id="KW-0325">Glycoprotein</keyword>
<keyword id="KW-0333">Golgi apparatus</keyword>
<keyword id="KW-0336">GPI-anchor</keyword>
<keyword id="KW-0449">Lipoprotein</keyword>
<keyword id="KW-0472">Membrane</keyword>
<keyword id="KW-0479">Metal-binding</keyword>
<keyword id="KW-0640">Prion</keyword>
<keyword id="KW-0677">Repeat</keyword>
<keyword id="KW-0732">Signal</keyword>
<sequence>MGKIQLGYWILVLFIVTWSDLGLCKKPKPRPGGGWNSGGSNRYPGQPGSPGGNRYPGWGHPQGGGTNWGQPHPGGSNWGQPHPGGSSWGQPHGGSNWGQGGYNKWKPDKPKTNLKHVAGAAAAGAVVGGLGGYMLGSAMSRPVIHFGNEYEDRYYRENQYRYPNQVMYRPIDQYSSQNNFVHDCVNITVKQHTTTTTTKGENFTETDIKIMERVVEQMCITQYQAEYEAAAQRAYNMAFFSAPPVTLLFLSFLIFLIVS</sequence>